<sequence>MFDLEYQLKNLPDKPGVYLMKNNLGEIIYVGKAKILKNRVRQYFQKSQKHSEKVKAMVKNIEEFEYIITDSEIEALILECNLIKKYRPKYNILLKDDKHYPFIKVTLAEDFPRVVSTRKVTKDGSKYFGPYVDGSSVKDIIELIKKTFPIRTCKKNIVEGAKAIRPCLNYQIGLCKAPCAQYIKKSEYREIIDDVIKLLSGKHLDIVENFKLNMEKAAENLEFEKAAMLRDKINIIEKIGEKQKIILNNFDNEDYISLYSDGKDTCFQVFFLRNGKIVGREHFIIEDTFDTNSSTLISNFLKEFYGGTAYIPKTIYVPNIEDEALLEQWLTLKKESKSTIKIPIKGEKKNILVLVEKNAKTTLENFKLKYLQEKALYDNVLKDLKNILRLQEEPIRIEAFDISNIQGFDSVGSMVVFEKGRAKPSDYRRFKINTVKGADDYKSMKEILTRRFQHGLSEIKSIQDRKLEFSSGKFSVFPDLILMDGGKGQINIALEVLNTFNIDIPVCGMVKDNKHRTRGLIYNGEEIIINKYGSVMKFITRVQDEVHRFAISYHRSLRGKNSFHSLLDDIPNIGEKRKKDLLFNFKSIDNIKKATYEELLSIPSMDKKSAECVLEFFK</sequence>
<accession>C1FMJ8</accession>
<reference key="1">
    <citation type="submission" date="2008-10" db="EMBL/GenBank/DDBJ databases">
        <title>Genome sequence of Clostridium botulinum A2 Kyoto.</title>
        <authorList>
            <person name="Shrivastava S."/>
            <person name="Brinkac L.M."/>
            <person name="Brown J.L."/>
            <person name="Bruce D."/>
            <person name="Detter C.C."/>
            <person name="Johnson E.A."/>
            <person name="Munk C.A."/>
            <person name="Smith L.A."/>
            <person name="Smith T.J."/>
            <person name="Sutton G."/>
            <person name="Brettin T.S."/>
        </authorList>
    </citation>
    <scope>NUCLEOTIDE SEQUENCE [LARGE SCALE GENOMIC DNA]</scope>
    <source>
        <strain>Kyoto / Type A2</strain>
    </source>
</reference>
<evidence type="ECO:0000255" key="1">
    <source>
        <dbReference type="HAMAP-Rule" id="MF_00203"/>
    </source>
</evidence>
<dbReference type="EMBL" id="CP001581">
    <property type="protein sequence ID" value="ACO87261.1"/>
    <property type="molecule type" value="Genomic_DNA"/>
</dbReference>
<dbReference type="RefSeq" id="WP_003357645.1">
    <property type="nucleotide sequence ID" value="NC_012563.1"/>
</dbReference>
<dbReference type="SMR" id="C1FMJ8"/>
<dbReference type="KEGG" id="cby:CLM_3842"/>
<dbReference type="eggNOG" id="COG0322">
    <property type="taxonomic scope" value="Bacteria"/>
</dbReference>
<dbReference type="HOGENOM" id="CLU_014841_3_2_9"/>
<dbReference type="Proteomes" id="UP000001374">
    <property type="component" value="Chromosome"/>
</dbReference>
<dbReference type="GO" id="GO:0005737">
    <property type="term" value="C:cytoplasm"/>
    <property type="evidence" value="ECO:0007669"/>
    <property type="project" value="UniProtKB-SubCell"/>
</dbReference>
<dbReference type="GO" id="GO:0009380">
    <property type="term" value="C:excinuclease repair complex"/>
    <property type="evidence" value="ECO:0007669"/>
    <property type="project" value="InterPro"/>
</dbReference>
<dbReference type="GO" id="GO:0003677">
    <property type="term" value="F:DNA binding"/>
    <property type="evidence" value="ECO:0007669"/>
    <property type="project" value="UniProtKB-UniRule"/>
</dbReference>
<dbReference type="GO" id="GO:0009381">
    <property type="term" value="F:excinuclease ABC activity"/>
    <property type="evidence" value="ECO:0007669"/>
    <property type="project" value="UniProtKB-UniRule"/>
</dbReference>
<dbReference type="GO" id="GO:0006289">
    <property type="term" value="P:nucleotide-excision repair"/>
    <property type="evidence" value="ECO:0007669"/>
    <property type="project" value="UniProtKB-UniRule"/>
</dbReference>
<dbReference type="GO" id="GO:0009432">
    <property type="term" value="P:SOS response"/>
    <property type="evidence" value="ECO:0007669"/>
    <property type="project" value="UniProtKB-UniRule"/>
</dbReference>
<dbReference type="CDD" id="cd10434">
    <property type="entry name" value="GIY-YIG_UvrC_Cho"/>
    <property type="match status" value="1"/>
</dbReference>
<dbReference type="FunFam" id="3.40.1440.10:FF:000001">
    <property type="entry name" value="UvrABC system protein C"/>
    <property type="match status" value="1"/>
</dbReference>
<dbReference type="Gene3D" id="1.10.150.20">
    <property type="entry name" value="5' to 3' exonuclease, C-terminal subdomain"/>
    <property type="match status" value="1"/>
</dbReference>
<dbReference type="Gene3D" id="3.40.1440.10">
    <property type="entry name" value="GIY-YIG endonuclease"/>
    <property type="match status" value="1"/>
</dbReference>
<dbReference type="Gene3D" id="4.10.860.10">
    <property type="entry name" value="UVR domain"/>
    <property type="match status" value="1"/>
</dbReference>
<dbReference type="Gene3D" id="3.30.420.340">
    <property type="entry name" value="UvrC, RNAse H endonuclease domain"/>
    <property type="match status" value="1"/>
</dbReference>
<dbReference type="HAMAP" id="MF_00203">
    <property type="entry name" value="UvrC"/>
    <property type="match status" value="1"/>
</dbReference>
<dbReference type="InterPro" id="IPR041663">
    <property type="entry name" value="DisA/LigA_HHH"/>
</dbReference>
<dbReference type="InterPro" id="IPR000305">
    <property type="entry name" value="GIY-YIG_endonuc"/>
</dbReference>
<dbReference type="InterPro" id="IPR035901">
    <property type="entry name" value="GIY-YIG_endonuc_sf"/>
</dbReference>
<dbReference type="InterPro" id="IPR047296">
    <property type="entry name" value="GIY-YIG_UvrC_Cho"/>
</dbReference>
<dbReference type="InterPro" id="IPR010994">
    <property type="entry name" value="RuvA_2-like"/>
</dbReference>
<dbReference type="InterPro" id="IPR001943">
    <property type="entry name" value="UVR_dom"/>
</dbReference>
<dbReference type="InterPro" id="IPR036876">
    <property type="entry name" value="UVR_dom_sf"/>
</dbReference>
<dbReference type="InterPro" id="IPR050066">
    <property type="entry name" value="UvrABC_protein_C"/>
</dbReference>
<dbReference type="InterPro" id="IPR004791">
    <property type="entry name" value="UvrC"/>
</dbReference>
<dbReference type="InterPro" id="IPR001162">
    <property type="entry name" value="UvrC_RNase_H_dom"/>
</dbReference>
<dbReference type="InterPro" id="IPR038476">
    <property type="entry name" value="UvrC_RNase_H_dom_sf"/>
</dbReference>
<dbReference type="NCBIfam" id="NF001824">
    <property type="entry name" value="PRK00558.1-5"/>
    <property type="match status" value="1"/>
</dbReference>
<dbReference type="NCBIfam" id="TIGR00194">
    <property type="entry name" value="uvrC"/>
    <property type="match status" value="1"/>
</dbReference>
<dbReference type="PANTHER" id="PTHR30562:SF1">
    <property type="entry name" value="UVRABC SYSTEM PROTEIN C"/>
    <property type="match status" value="1"/>
</dbReference>
<dbReference type="PANTHER" id="PTHR30562">
    <property type="entry name" value="UVRC/OXIDOREDUCTASE"/>
    <property type="match status" value="1"/>
</dbReference>
<dbReference type="Pfam" id="PF01541">
    <property type="entry name" value="GIY-YIG"/>
    <property type="match status" value="1"/>
</dbReference>
<dbReference type="Pfam" id="PF12826">
    <property type="entry name" value="HHH_2"/>
    <property type="match status" value="1"/>
</dbReference>
<dbReference type="Pfam" id="PF02151">
    <property type="entry name" value="UVR"/>
    <property type="match status" value="1"/>
</dbReference>
<dbReference type="Pfam" id="PF22920">
    <property type="entry name" value="UvrC_RNaseH"/>
    <property type="match status" value="1"/>
</dbReference>
<dbReference type="Pfam" id="PF08459">
    <property type="entry name" value="UvrC_RNaseH_dom"/>
    <property type="match status" value="1"/>
</dbReference>
<dbReference type="SMART" id="SM00465">
    <property type="entry name" value="GIYc"/>
    <property type="match status" value="1"/>
</dbReference>
<dbReference type="SUPFAM" id="SSF46600">
    <property type="entry name" value="C-terminal UvrC-binding domain of UvrB"/>
    <property type="match status" value="1"/>
</dbReference>
<dbReference type="SUPFAM" id="SSF82771">
    <property type="entry name" value="GIY-YIG endonuclease"/>
    <property type="match status" value="1"/>
</dbReference>
<dbReference type="SUPFAM" id="SSF47781">
    <property type="entry name" value="RuvA domain 2-like"/>
    <property type="match status" value="1"/>
</dbReference>
<dbReference type="PROSITE" id="PS50164">
    <property type="entry name" value="GIY_YIG"/>
    <property type="match status" value="1"/>
</dbReference>
<dbReference type="PROSITE" id="PS50151">
    <property type="entry name" value="UVR"/>
    <property type="match status" value="1"/>
</dbReference>
<dbReference type="PROSITE" id="PS50165">
    <property type="entry name" value="UVRC"/>
    <property type="match status" value="1"/>
</dbReference>
<feature type="chain" id="PRO_1000200576" description="UvrABC system protein C">
    <location>
        <begin position="1"/>
        <end position="618"/>
    </location>
</feature>
<feature type="domain" description="GIY-YIG" evidence="1">
    <location>
        <begin position="13"/>
        <end position="92"/>
    </location>
</feature>
<feature type="domain" description="UVR" evidence="1">
    <location>
        <begin position="204"/>
        <end position="239"/>
    </location>
</feature>
<name>UVRC_CLOBJ</name>
<protein>
    <recommendedName>
        <fullName evidence="1">UvrABC system protein C</fullName>
        <shortName evidence="1">Protein UvrC</shortName>
    </recommendedName>
    <alternativeName>
        <fullName evidence="1">Excinuclease ABC subunit C</fullName>
    </alternativeName>
</protein>
<comment type="function">
    <text evidence="1">The UvrABC repair system catalyzes the recognition and processing of DNA lesions. UvrC both incises the 5' and 3' sides of the lesion. The N-terminal half is responsible for the 3' incision and the C-terminal half is responsible for the 5' incision.</text>
</comment>
<comment type="subunit">
    <text evidence="1">Interacts with UvrB in an incision complex.</text>
</comment>
<comment type="subcellular location">
    <subcellularLocation>
        <location evidence="1">Cytoplasm</location>
    </subcellularLocation>
</comment>
<comment type="similarity">
    <text evidence="1">Belongs to the UvrC family.</text>
</comment>
<proteinExistence type="inferred from homology"/>
<keyword id="KW-0963">Cytoplasm</keyword>
<keyword id="KW-0227">DNA damage</keyword>
<keyword id="KW-0228">DNA excision</keyword>
<keyword id="KW-0234">DNA repair</keyword>
<keyword id="KW-0267">Excision nuclease</keyword>
<keyword id="KW-0742">SOS response</keyword>
<organism>
    <name type="scientific">Clostridium botulinum (strain Kyoto / Type A2)</name>
    <dbReference type="NCBI Taxonomy" id="536232"/>
    <lineage>
        <taxon>Bacteria</taxon>
        <taxon>Bacillati</taxon>
        <taxon>Bacillota</taxon>
        <taxon>Clostridia</taxon>
        <taxon>Eubacteriales</taxon>
        <taxon>Clostridiaceae</taxon>
        <taxon>Clostridium</taxon>
    </lineage>
</organism>
<gene>
    <name evidence="1" type="primary">uvrC</name>
    <name type="ordered locus">CLM_3842</name>
</gene>